<organism evidence="6">
    <name type="scientific">Medicago truncatula</name>
    <name type="common">Barrel medic</name>
    <name type="synonym">Medicago tribuloides</name>
    <dbReference type="NCBI Taxonomy" id="3880"/>
    <lineage>
        <taxon>Eukaryota</taxon>
        <taxon>Viridiplantae</taxon>
        <taxon>Streptophyta</taxon>
        <taxon>Embryophyta</taxon>
        <taxon>Tracheophyta</taxon>
        <taxon>Spermatophyta</taxon>
        <taxon>Magnoliopsida</taxon>
        <taxon>eudicotyledons</taxon>
        <taxon>Gunneridae</taxon>
        <taxon>Pentapetalae</taxon>
        <taxon>rosids</taxon>
        <taxon>fabids</taxon>
        <taxon>Fabales</taxon>
        <taxon>Fabaceae</taxon>
        <taxon>Papilionoideae</taxon>
        <taxon>50 kb inversion clade</taxon>
        <taxon>NPAAA clade</taxon>
        <taxon>Hologalegina</taxon>
        <taxon>IRL clade</taxon>
        <taxon>Trifolieae</taxon>
        <taxon>Medicago</taxon>
    </lineage>
</organism>
<protein>
    <recommendedName>
        <fullName evidence="5">Isoflavone 2'-hydroxylase</fullName>
        <ecNumber evidence="4">1.14.14.89</ecNumber>
    </recommendedName>
    <alternativeName>
        <fullName>4'-methoxyisoflavone 2'-hydroxylase</fullName>
    </alternativeName>
    <alternativeName>
        <fullName evidence="5">Cytochrome P450 81E7</fullName>
    </alternativeName>
</protein>
<proteinExistence type="evidence at protein level"/>
<dbReference type="EC" id="1.14.14.89" evidence="4"/>
<dbReference type="EMBL" id="AY278227">
    <property type="protein sequence ID" value="AAQ20040.1"/>
    <property type="molecule type" value="mRNA"/>
</dbReference>
<dbReference type="EMBL" id="CM001220">
    <property type="protein sequence ID" value="KEH31433.1"/>
    <property type="molecule type" value="Genomic_DNA"/>
</dbReference>
<dbReference type="RefSeq" id="XP_013457402.1">
    <property type="nucleotide sequence ID" value="XM_013601948.1"/>
</dbReference>
<dbReference type="SMR" id="Q6WNR0"/>
<dbReference type="STRING" id="3880.Q6WNR0"/>
<dbReference type="EnsemblPlants" id="rna25573">
    <property type="protein sequence ID" value="RHN62935.1"/>
    <property type="gene ID" value="gene25573"/>
</dbReference>
<dbReference type="GeneID" id="25493449"/>
<dbReference type="Gramene" id="rna25573">
    <property type="protein sequence ID" value="RHN62935.1"/>
    <property type="gene ID" value="gene25573"/>
</dbReference>
<dbReference type="KEGG" id="mtr:25493449"/>
<dbReference type="HOGENOM" id="CLU_001570_4_0_1"/>
<dbReference type="OrthoDB" id="1055148at2759"/>
<dbReference type="BRENDA" id="1.14.14.90">
    <property type="organism ID" value="3201"/>
</dbReference>
<dbReference type="SABIO-RK" id="Q6WNR0"/>
<dbReference type="Proteomes" id="UP000002051">
    <property type="component" value="Chromosome 4"/>
</dbReference>
<dbReference type="ExpressionAtlas" id="Q6WNR0">
    <property type="expression patterns" value="differential"/>
</dbReference>
<dbReference type="GO" id="GO:0005789">
    <property type="term" value="C:endoplasmic reticulum membrane"/>
    <property type="evidence" value="ECO:0007669"/>
    <property type="project" value="UniProtKB-SubCell"/>
</dbReference>
<dbReference type="GO" id="GO:0016020">
    <property type="term" value="C:membrane"/>
    <property type="evidence" value="ECO:0000318"/>
    <property type="project" value="GO_Central"/>
</dbReference>
<dbReference type="GO" id="GO:0047957">
    <property type="term" value="F:4'-methoxyisoflavone 2'-hydroxylase activity"/>
    <property type="evidence" value="ECO:0007669"/>
    <property type="project" value="UniProtKB-EC"/>
</dbReference>
<dbReference type="GO" id="GO:0020037">
    <property type="term" value="F:heme binding"/>
    <property type="evidence" value="ECO:0007669"/>
    <property type="project" value="InterPro"/>
</dbReference>
<dbReference type="GO" id="GO:0005506">
    <property type="term" value="F:iron ion binding"/>
    <property type="evidence" value="ECO:0007669"/>
    <property type="project" value="InterPro"/>
</dbReference>
<dbReference type="GO" id="GO:0016709">
    <property type="term" value="F:oxidoreductase activity, acting on paired donors, with incorporation or reduction of molecular oxygen, NAD(P)H as one donor, and incorporation of one atom of oxygen"/>
    <property type="evidence" value="ECO:0000318"/>
    <property type="project" value="GO_Central"/>
</dbReference>
<dbReference type="CDD" id="cd20653">
    <property type="entry name" value="CYP81"/>
    <property type="match status" value="1"/>
</dbReference>
<dbReference type="FunFam" id="1.10.630.10:FF:000023">
    <property type="entry name" value="Cytochrome P450 family protein"/>
    <property type="match status" value="1"/>
</dbReference>
<dbReference type="Gene3D" id="1.10.630.10">
    <property type="entry name" value="Cytochrome P450"/>
    <property type="match status" value="1"/>
</dbReference>
<dbReference type="InterPro" id="IPR001128">
    <property type="entry name" value="Cyt_P450"/>
</dbReference>
<dbReference type="InterPro" id="IPR017972">
    <property type="entry name" value="Cyt_P450_CS"/>
</dbReference>
<dbReference type="InterPro" id="IPR002401">
    <property type="entry name" value="Cyt_P450_E_grp-I"/>
</dbReference>
<dbReference type="InterPro" id="IPR036396">
    <property type="entry name" value="Cyt_P450_sf"/>
</dbReference>
<dbReference type="InterPro" id="IPR050651">
    <property type="entry name" value="Plant_Cytochrome_P450_Monoox"/>
</dbReference>
<dbReference type="PANTHER" id="PTHR47947">
    <property type="entry name" value="CYTOCHROME P450 82C3-RELATED"/>
    <property type="match status" value="1"/>
</dbReference>
<dbReference type="PANTHER" id="PTHR47947:SF24">
    <property type="entry name" value="ISOFLAVONE 2'-HYDROXYLASE-LIKE"/>
    <property type="match status" value="1"/>
</dbReference>
<dbReference type="Pfam" id="PF00067">
    <property type="entry name" value="p450"/>
    <property type="match status" value="1"/>
</dbReference>
<dbReference type="PRINTS" id="PR00463">
    <property type="entry name" value="EP450I"/>
</dbReference>
<dbReference type="PRINTS" id="PR00385">
    <property type="entry name" value="P450"/>
</dbReference>
<dbReference type="SUPFAM" id="SSF48264">
    <property type="entry name" value="Cytochrome P450"/>
    <property type="match status" value="1"/>
</dbReference>
<dbReference type="PROSITE" id="PS00086">
    <property type="entry name" value="CYTOCHROME_P450"/>
    <property type="match status" value="1"/>
</dbReference>
<evidence type="ECO:0000250" key="1">
    <source>
        <dbReference type="UniProtKB" id="P04798"/>
    </source>
</evidence>
<evidence type="ECO:0000255" key="2"/>
<evidence type="ECO:0000255" key="3">
    <source>
        <dbReference type="RuleBase" id="RU000461"/>
    </source>
</evidence>
<evidence type="ECO:0000269" key="4">
    <source>
    </source>
</evidence>
<evidence type="ECO:0000303" key="5">
    <source>
    </source>
</evidence>
<evidence type="ECO:0000312" key="6">
    <source>
        <dbReference type="EMBL" id="AAQ20040.1"/>
    </source>
</evidence>
<evidence type="ECO:0000312" key="7">
    <source>
        <dbReference type="Proteomes" id="UP000002051"/>
    </source>
</evidence>
<name>C81E7_MEDTR</name>
<gene>
    <name evidence="5" type="primary">CYP81E7</name>
</gene>
<keyword id="KW-0256">Endoplasmic reticulum</keyword>
<keyword id="KW-0349">Heme</keyword>
<keyword id="KW-0408">Iron</keyword>
<keyword id="KW-0472">Membrane</keyword>
<keyword id="KW-0479">Metal-binding</keyword>
<keyword id="KW-0503">Monooxygenase</keyword>
<keyword id="KW-0560">Oxidoreductase</keyword>
<keyword id="KW-1185">Reference proteome</keyword>
<keyword id="KW-0812">Transmembrane</keyword>
<keyword id="KW-1133">Transmembrane helix</keyword>
<feature type="chain" id="PRO_0000430742" description="Isoflavone 2'-hydroxylase">
    <location>
        <begin position="1"/>
        <end position="498"/>
    </location>
</feature>
<feature type="transmembrane region" description="Helical" evidence="2">
    <location>
        <begin position="3"/>
        <end position="23"/>
    </location>
</feature>
<feature type="binding site" description="axial binding residue" evidence="1">
    <location>
        <position position="436"/>
    </location>
    <ligand>
        <name>heme</name>
        <dbReference type="ChEBI" id="CHEBI:30413"/>
    </ligand>
    <ligandPart>
        <name>Fe</name>
        <dbReference type="ChEBI" id="CHEBI:18248"/>
    </ligandPart>
</feature>
<accession>Q6WNR0</accession>
<reference key="1">
    <citation type="journal article" date="2003" name="Plant J.">
        <title>Regiospecific hydroxylation of isoflavones by cytochrome P450 81E enzymes from Medicago truncatula.</title>
        <authorList>
            <person name="Liu C.J."/>
            <person name="Huhman D."/>
            <person name="Sumner L.W."/>
            <person name="Dixon R.A."/>
        </authorList>
    </citation>
    <scope>NUCLEOTIDE SEQUENCE [MRNA]</scope>
    <scope>FUNCTION</scope>
    <scope>CATALYTIC ACTIVITY</scope>
    <scope>BIOPHYSICOCHEMICAL PROPERTIES</scope>
    <scope>SUBCELLULAR LOCATION</scope>
    <scope>TISSUE SPECIFICITY</scope>
    <scope>INDUCTION</scope>
</reference>
<reference key="2">
    <citation type="journal article" date="2011" name="Nature">
        <title>The Medicago genome provides insight into the evolution of rhizobial symbioses.</title>
        <authorList>
            <person name="Young N.D."/>
            <person name="Debelle F."/>
            <person name="Oldroyd G.E.D."/>
            <person name="Geurts R."/>
            <person name="Cannon S.B."/>
            <person name="Udvardi M.K."/>
            <person name="Benedito V.A."/>
            <person name="Mayer K.F.X."/>
            <person name="Gouzy J."/>
            <person name="Schoof H."/>
            <person name="Van de Peer Y."/>
            <person name="Proost S."/>
            <person name="Cook D.R."/>
            <person name="Meyers B.C."/>
            <person name="Spannagl M."/>
            <person name="Cheung F."/>
            <person name="De Mita S."/>
            <person name="Krishnakumar V."/>
            <person name="Gundlach H."/>
            <person name="Zhou S."/>
            <person name="Mudge J."/>
            <person name="Bharti A.K."/>
            <person name="Murray J.D."/>
            <person name="Naoumkina M.A."/>
            <person name="Rosen B."/>
            <person name="Silverstein K.A.T."/>
            <person name="Tang H."/>
            <person name="Rombauts S."/>
            <person name="Zhao P.X."/>
            <person name="Zhou P."/>
            <person name="Barbe V."/>
            <person name="Bardou P."/>
            <person name="Bechner M."/>
            <person name="Bellec A."/>
            <person name="Berger A."/>
            <person name="Berges H."/>
            <person name="Bidwell S."/>
            <person name="Bisseling T."/>
            <person name="Choisne N."/>
            <person name="Couloux A."/>
            <person name="Denny R."/>
            <person name="Deshpande S."/>
            <person name="Dai X."/>
            <person name="Doyle J.J."/>
            <person name="Dudez A.-M."/>
            <person name="Farmer A.D."/>
            <person name="Fouteau S."/>
            <person name="Franken C."/>
            <person name="Gibelin C."/>
            <person name="Gish J."/>
            <person name="Goldstein S."/>
            <person name="Gonzalez A.J."/>
            <person name="Green P.J."/>
            <person name="Hallab A."/>
            <person name="Hartog M."/>
            <person name="Hua A."/>
            <person name="Humphray S.J."/>
            <person name="Jeong D.-H."/>
            <person name="Jing Y."/>
            <person name="Jocker A."/>
            <person name="Kenton S.M."/>
            <person name="Kim D.-J."/>
            <person name="Klee K."/>
            <person name="Lai H."/>
            <person name="Lang C."/>
            <person name="Lin S."/>
            <person name="Macmil S.L."/>
            <person name="Magdelenat G."/>
            <person name="Matthews L."/>
            <person name="McCorrison J."/>
            <person name="Monaghan E.L."/>
            <person name="Mun J.-H."/>
            <person name="Najar F.Z."/>
            <person name="Nicholson C."/>
            <person name="Noirot C."/>
            <person name="O'Bleness M."/>
            <person name="Paule C.R."/>
            <person name="Poulain J."/>
            <person name="Prion F."/>
            <person name="Qin B."/>
            <person name="Qu C."/>
            <person name="Retzel E.F."/>
            <person name="Riddle C."/>
            <person name="Sallet E."/>
            <person name="Samain S."/>
            <person name="Samson N."/>
            <person name="Sanders I."/>
            <person name="Saurat O."/>
            <person name="Scarpelli C."/>
            <person name="Schiex T."/>
            <person name="Segurens B."/>
            <person name="Severin A.J."/>
            <person name="Sherrier D.J."/>
            <person name="Shi R."/>
            <person name="Sims S."/>
            <person name="Singer S.R."/>
            <person name="Sinharoy S."/>
            <person name="Sterck L."/>
            <person name="Viollet A."/>
            <person name="Wang B.-B."/>
            <person name="Wang K."/>
            <person name="Wang M."/>
            <person name="Wang X."/>
            <person name="Warfsmann J."/>
            <person name="Weissenbach J."/>
            <person name="White D.D."/>
            <person name="White J.D."/>
            <person name="Wiley G.B."/>
            <person name="Wincker P."/>
            <person name="Xing Y."/>
            <person name="Yang L."/>
            <person name="Yao Z."/>
            <person name="Ying F."/>
            <person name="Zhai J."/>
            <person name="Zhou L."/>
            <person name="Zuber A."/>
            <person name="Denarie J."/>
            <person name="Dixon R.A."/>
            <person name="May G.D."/>
            <person name="Schwartz D.C."/>
            <person name="Rogers J."/>
            <person name="Quetier F."/>
            <person name="Town C.D."/>
            <person name="Roe B.A."/>
        </authorList>
    </citation>
    <scope>NUCLEOTIDE SEQUENCE [LARGE SCALE GENOMIC DNA]</scope>
    <source>
        <strain evidence="7">cv. Jemalong A17</strain>
    </source>
</reference>
<reference key="3">
    <citation type="journal article" date="2014" name="BMC Genomics">
        <title>An improved genome release (version Mt4.0) for the model legume Medicago truncatula.</title>
        <authorList>
            <person name="Tang H."/>
            <person name="Krishnakumar V."/>
            <person name="Bidwell S."/>
            <person name="Rosen B."/>
            <person name="Chan A."/>
            <person name="Zhou S."/>
            <person name="Gentzbittel L."/>
            <person name="Childs K.L."/>
            <person name="Yandell M."/>
            <person name="Gundlach H."/>
            <person name="Mayer K.F."/>
            <person name="Schwartz D.C."/>
            <person name="Town C.D."/>
        </authorList>
    </citation>
    <scope>GENOME REANNOTATION</scope>
    <source>
        <strain>cv. Jemalong A17</strain>
    </source>
</reference>
<comment type="function">
    <text evidence="4">Involved in the biosynthesis of the pterocarpin phytoalexins. Acts on isoflavones with a 4'-methoxy group on the B-ring, such as formononetin and biochanin A, and on pseudobaptigenin. Has a low activity with daidzein and genistein and no activity with the 7-O-methylated isoflavonoids isoformononetin and prunetin.</text>
</comment>
<comment type="catalytic activity">
    <reaction evidence="4">
        <text>formononetin + reduced [NADPH--hemoprotein reductase] + O2 = 2'-hydroxyformononetin + oxidized [NADPH--hemoprotein reductase] + H2O + H(+)</text>
        <dbReference type="Rhea" id="RHEA:12388"/>
        <dbReference type="Rhea" id="RHEA-COMP:11964"/>
        <dbReference type="Rhea" id="RHEA-COMP:11965"/>
        <dbReference type="ChEBI" id="CHEBI:15377"/>
        <dbReference type="ChEBI" id="CHEBI:15378"/>
        <dbReference type="ChEBI" id="CHEBI:15379"/>
        <dbReference type="ChEBI" id="CHEBI:57618"/>
        <dbReference type="ChEBI" id="CHEBI:58210"/>
        <dbReference type="ChEBI" id="CHEBI:77687"/>
        <dbReference type="ChEBI" id="CHEBI:77688"/>
        <dbReference type="EC" id="1.14.14.89"/>
    </reaction>
</comment>
<comment type="cofactor">
    <cofactor evidence="1">
        <name>heme</name>
        <dbReference type="ChEBI" id="CHEBI:30413"/>
    </cofactor>
</comment>
<comment type="biophysicochemical properties">
    <kinetics>
        <KM evidence="4">67 uM for formononetin</KM>
        <KM evidence="4">51 uM for biochanin A</KM>
        <text evidence="4">kcat is 0.015 sec(-1) with formononetin as substrate. kcat is 0.033 sec(-1) with biochanin A as substrate.</text>
    </kinetics>
    <phDependence>
        <text evidence="4">Optimum pH is 8.0.</text>
    </phDependence>
</comment>
<comment type="subcellular location">
    <subcellularLocation>
        <location evidence="4">Endoplasmic reticulum membrane</location>
        <topology evidence="2">Single-pass membrane protein</topology>
    </subcellularLocation>
</comment>
<comment type="tissue specificity">
    <text evidence="4">Expressed constitutively in roots, but present at very low levels in uninfected stems and leaves.</text>
</comment>
<comment type="induction">
    <text evidence="4">Down-regulated in roots by drought Up-regulated in leaves upon infection with fungus. No regulation by methyl jasmonate or elicitor treatment.</text>
</comment>
<comment type="similarity">
    <text evidence="3">Belongs to the cytochrome P450 family.</text>
</comment>
<sequence length="498" mass="57641">MGILSYLCYSLFYLSIFFIIRLLFQSRKFKNLPPGPTSLPIIGNLHHLKRPLNRTFKALTEKYGNVISLWFGSRLVVVVSSLSEFQECFTKNDVVLANRPRFLSGKYIFYNYTTLGSTSYGEHWRNLRRITSLDVLSNHRINNFAPIRRDETQRLIKKLAEDSSTKFAEVELTFRFFDMTFNNIMRMISGKRYYGDDCDISEVQEASQFRDMVSELLQLSGANNKTDFMPLLKFLDFENLEKRVKRIGEKNDVFLSGLLQEQRSKKERTNTMIDHLLNMQESQPEYYTDTIIKGLCLAMLLAGTDSSAVTLEWTMSNILNYPEVLKKVRDEVDTHVGQDRLVDESDLPKLTYLRNVIYETLRLYTPAPLLLPHSTADECIMGGYKVPRDTIVLINAWAIHRDPETWSEATTFKPERFDKKGELEKMIAFGMGRRACPGEGLALRAISMTLALLVQCFDWKRINDEKIDMSERDGFTMTKLLPLKAMCKTRPVVNKVFK</sequence>